<keyword id="KW-1132">Decay of host mRNAs by virus</keyword>
<keyword id="KW-1262">Eukaryotic host gene expression shutoff by virus</keyword>
<keyword id="KW-1193">Eukaryotic host translation shutoff by virus</keyword>
<keyword id="KW-1190">Host gene expression shutoff by virus</keyword>
<keyword id="KW-1192">Host mRNA suppression by virus</keyword>
<keyword id="KW-0945">Host-virus interaction</keyword>
<keyword id="KW-0547">Nucleotide-binding</keyword>
<keyword id="KW-0548">Nucleotidyltransferase</keyword>
<keyword id="KW-0688">Ribosomal frameshifting</keyword>
<keyword id="KW-0694">RNA-binding</keyword>
<keyword id="KW-0696">RNA-directed RNA polymerase</keyword>
<keyword id="KW-0808">Transferase</keyword>
<keyword id="KW-0693">Viral RNA replication</keyword>
<feature type="chain" id="PRO_0000037402" description="RNA-directed RNA polymerase">
    <location>
        <begin position="1" status="less than"/>
        <end position="307" status="greater than"/>
    </location>
</feature>
<feature type="domain" description="Nsp12 RNA-dependent RNA polymerase" evidence="3">
    <location>
        <begin position="1" status="less than"/>
        <end position="307" status="greater than"/>
    </location>
</feature>
<feature type="domain" description="RdRp catalytic" evidence="2">
    <location>
        <begin position="107"/>
        <end position="269"/>
    </location>
</feature>
<feature type="region of interest" description="RdRp Fingers N-ter" evidence="3">
    <location>
        <begin position="1"/>
        <end position="76"/>
    </location>
</feature>
<feature type="region of interest" description="RdRp Palm N-ter" evidence="3">
    <location>
        <begin position="77"/>
        <end position="115"/>
    </location>
</feature>
<feature type="region of interest" description="RdRp Fingers C-ter" evidence="3">
    <location>
        <begin position="116"/>
        <end position="174"/>
    </location>
</feature>
<feature type="region of interest" description="RdRp Palm C-ter" evidence="3">
    <location>
        <begin position="175"/>
        <end position="307" status="greater than"/>
    </location>
</feature>
<feature type="region of interest" description="RdRp Thumb" evidence="3">
    <location>
        <position position="307" status="uncertain"/>
    </location>
</feature>
<feature type="active site" evidence="3">
    <location>
        <position position="254"/>
    </location>
</feature>
<feature type="active site" evidence="3">
    <location>
        <position position="255"/>
    </location>
</feature>
<feature type="active site" evidence="3">
    <location>
        <position position="256"/>
    </location>
</feature>
<feature type="non-terminal residue">
    <location>
        <position position="1"/>
    </location>
</feature>
<feature type="non-terminal residue">
    <location>
        <position position="307"/>
    </location>
</feature>
<accession>Q9WQ77</accession>
<reference key="1">
    <citation type="journal article" date="1999" name="Virus Res.">
        <title>Phylogenetic analysis of a highly conserved region of the polymerase gene from 11 coronaviruses and development of a consensus polymerase chain reaction assay.</title>
        <authorList>
            <person name="Stephensen C.B."/>
            <person name="Casebolt D.B."/>
            <person name="Gangopadhyay N.N."/>
        </authorList>
    </citation>
    <scope>NUCLEOTIDE SEQUENCE [GENOMIC RNA]</scope>
</reference>
<proteinExistence type="inferred from homology"/>
<comment type="function">
    <text>The replicase polyprotein of coronaviruses is a multifunctional protein: it contains the activities necessary for the transcription of negative stranded RNA, leader RNA, subgenomic mRNAs and progeny virion RNA as well as proteinases responsible for the cleavage of the polyprotein into functional products.</text>
</comment>
<comment type="function">
    <text evidence="1">Non-structural protein 1: binds to the 40S ribosomal subunit and inhibits host translation. The nsp1-40S ribosome complex further induces an endonucleolytic cleavage near the 5'UTR of host mRNAs, targeting them for degradation. By suppressing host gene expression, nsp1 facilitates efficient viral gene expression in infected cells and evasion from host immune response (By similarity).</text>
</comment>
<comment type="catalytic activity">
    <reaction evidence="2">
        <text>RNA(n) + a ribonucleoside 5'-triphosphate = RNA(n+1) + diphosphate</text>
        <dbReference type="Rhea" id="RHEA:21248"/>
        <dbReference type="Rhea" id="RHEA-COMP:14527"/>
        <dbReference type="Rhea" id="RHEA-COMP:17342"/>
        <dbReference type="ChEBI" id="CHEBI:33019"/>
        <dbReference type="ChEBI" id="CHEBI:61557"/>
        <dbReference type="ChEBI" id="CHEBI:140395"/>
        <dbReference type="EC" id="2.7.7.48"/>
    </reaction>
</comment>
<comment type="alternative products">
    <event type="ribosomal frameshifting"/>
    <isoform>
        <id>Q9WQ77-1</id>
        <name>Replicase polyprotein 1ab</name>
        <name>pp1ab</name>
        <sequence type="displayed"/>
    </isoform>
    <isoform>
        <id>Q9WQ77-2</id>
        <name>Replicase polyprotein 1a</name>
        <name>pp1a</name>
        <name>ORF1a polyprotein</name>
        <sequence type="not described"/>
    </isoform>
</comment>
<comment type="miscellaneous">
    <molecule>Isoform Replicase polyprotein 1ab</molecule>
    <text>Produced by -1 ribosomal frameshifting at the 1a-1b genes boundary.</text>
</comment>
<comment type="miscellaneous">
    <molecule>Isoform Replicase polyprotein 1a</molecule>
    <text evidence="4">Produced by conventional translation.</text>
</comment>
<comment type="similarity">
    <text evidence="4">Belongs to the coronaviruses polyprotein 1ab family.</text>
</comment>
<name>R1AB_CVRSD</name>
<evidence type="ECO:0000250" key="1"/>
<evidence type="ECO:0000255" key="2">
    <source>
        <dbReference type="PROSITE-ProRule" id="PRU00539"/>
    </source>
</evidence>
<evidence type="ECO:0000255" key="3">
    <source>
        <dbReference type="PROSITE-ProRule" id="PRU01293"/>
    </source>
</evidence>
<evidence type="ECO:0000305" key="4"/>
<dbReference type="EC" id="2.7.7.48"/>
<dbReference type="EMBL" id="AF124990">
    <property type="protein sequence ID" value="AAD32994.1"/>
    <property type="molecule type" value="Genomic_RNA"/>
</dbReference>
<dbReference type="SMR" id="Q9WQ77"/>
<dbReference type="GO" id="GO:0000166">
    <property type="term" value="F:nucleotide binding"/>
    <property type="evidence" value="ECO:0007669"/>
    <property type="project" value="UniProtKB-KW"/>
</dbReference>
<dbReference type="GO" id="GO:0003723">
    <property type="term" value="F:RNA binding"/>
    <property type="evidence" value="ECO:0007669"/>
    <property type="project" value="UniProtKB-KW"/>
</dbReference>
<dbReference type="GO" id="GO:0003968">
    <property type="term" value="F:RNA-directed RNA polymerase activity"/>
    <property type="evidence" value="ECO:0007669"/>
    <property type="project" value="UniProtKB-KW"/>
</dbReference>
<dbReference type="GO" id="GO:0006351">
    <property type="term" value="P:DNA-templated transcription"/>
    <property type="evidence" value="ECO:0007669"/>
    <property type="project" value="InterPro"/>
</dbReference>
<dbReference type="GO" id="GO:0039595">
    <property type="term" value="P:symbiont-mediated degradation of host mRNA"/>
    <property type="evidence" value="ECO:0007669"/>
    <property type="project" value="UniProtKB-KW"/>
</dbReference>
<dbReference type="GO" id="GO:0039657">
    <property type="term" value="P:symbiont-mediated suppression of host gene expression"/>
    <property type="evidence" value="ECO:0007669"/>
    <property type="project" value="UniProtKB-KW"/>
</dbReference>
<dbReference type="GO" id="GO:0039694">
    <property type="term" value="P:viral RNA genome replication"/>
    <property type="evidence" value="ECO:0007669"/>
    <property type="project" value="InterPro"/>
</dbReference>
<dbReference type="GO" id="GO:0075523">
    <property type="term" value="P:viral translational frameshifting"/>
    <property type="evidence" value="ECO:0007669"/>
    <property type="project" value="UniProtKB-KW"/>
</dbReference>
<dbReference type="InterPro" id="IPR043502">
    <property type="entry name" value="DNA/RNA_pol_sf"/>
</dbReference>
<dbReference type="InterPro" id="IPR046441">
    <property type="entry name" value="RdRp_CoV"/>
</dbReference>
<dbReference type="InterPro" id="IPR001205">
    <property type="entry name" value="RNA-dir_pol_C"/>
</dbReference>
<dbReference type="InterPro" id="IPR007094">
    <property type="entry name" value="RNA-dir_pol_PSvirus"/>
</dbReference>
<dbReference type="Pfam" id="PF00680">
    <property type="entry name" value="RdRP_1"/>
    <property type="match status" value="1"/>
</dbReference>
<dbReference type="SUPFAM" id="SSF56672">
    <property type="entry name" value="DNA/RNA polymerases"/>
    <property type="match status" value="1"/>
</dbReference>
<dbReference type="PROSITE" id="PS51948">
    <property type="entry name" value="COV_NSP12_RDRP"/>
    <property type="match status" value="1"/>
</dbReference>
<dbReference type="PROSITE" id="PS50507">
    <property type="entry name" value="RDRP_SSRNA_POS"/>
    <property type="match status" value="1"/>
</dbReference>
<organismHost>
    <name type="scientific">Rattus norvegicus</name>
    <name type="common">Rat</name>
    <dbReference type="NCBI Taxonomy" id="10116"/>
</organismHost>
<sequence length="307" mass="34721">FNKFGKARLYYEALSFEEQDEIYAYTKRNVLPTLTQMNLKYAISAKNRARTVAGVSILSTMTGRMFHQKCLKSIAATRGVPVVIGTTKFYGGWDDMLRRLIKDVDSPVLMGWDYPKCDRAMPNILRIVSSLVLARKHDSCCSHTDRFYRLANECAQVLSEIVMCGGCYYVKPGGTSSGDATTAFANSVFNICQAVSANVCSLMACNGHKIEDLSIRELQKRLYSNVYRADHVDPAFVSEYYEFLNKHFSMMILSDDGVVCYNSEFASKGYIANISAFQQVLYYQNNVFMSEAKCWVETDIEKGPHEF</sequence>
<protein>
    <recommendedName>
        <fullName>Replicase polyprotein 1ab</fullName>
        <shortName>pp1ab</shortName>
    </recommendedName>
    <alternativeName>
        <fullName>ORF1ab polyprotein</fullName>
    </alternativeName>
    <component>
        <recommendedName>
            <fullName>RNA-directed RNA polymerase</fullName>
            <shortName>Pol</shortName>
            <shortName>RdRp</shortName>
            <ecNumber>2.7.7.48</ecNumber>
        </recommendedName>
        <alternativeName>
            <fullName>nsp12</fullName>
        </alternativeName>
    </component>
</protein>
<organism>
    <name type="scientific">Rat coronavirus (strain 681)</name>
    <name type="common">RCV-SDAV</name>
    <name type="synonym">Sialodacryoadenitis virus SDAV-681</name>
    <dbReference type="NCBI Taxonomy" id="33740"/>
    <lineage>
        <taxon>Viruses</taxon>
        <taxon>Riboviria</taxon>
        <taxon>Orthornavirae</taxon>
        <taxon>Pisuviricota</taxon>
        <taxon>Pisoniviricetes</taxon>
        <taxon>Nidovirales</taxon>
        <taxon>Cornidovirineae</taxon>
        <taxon>Coronaviridae</taxon>
        <taxon>Orthocoronavirinae</taxon>
        <taxon>Betacoronavirus</taxon>
        <taxon>Embecovirus</taxon>
        <taxon>Murine coronavirus</taxon>
    </lineage>
</organism>
<gene>
    <name type="primary">rep</name>
    <name type="ORF">1a-1b</name>
</gene>